<gene>
    <name evidence="1" type="primary">rplC</name>
    <name type="ordered locus">swp_2011</name>
</gene>
<dbReference type="EMBL" id="CP000472">
    <property type="protein sequence ID" value="ACJ28767.1"/>
    <property type="molecule type" value="Genomic_DNA"/>
</dbReference>
<dbReference type="RefSeq" id="WP_020912139.1">
    <property type="nucleotide sequence ID" value="NC_011566.1"/>
</dbReference>
<dbReference type="SMR" id="B8CND3"/>
<dbReference type="STRING" id="225849.swp_2011"/>
<dbReference type="KEGG" id="swp:swp_2011"/>
<dbReference type="eggNOG" id="COG0087">
    <property type="taxonomic scope" value="Bacteria"/>
</dbReference>
<dbReference type="HOGENOM" id="CLU_044142_4_1_6"/>
<dbReference type="OrthoDB" id="9806135at2"/>
<dbReference type="Proteomes" id="UP000000753">
    <property type="component" value="Chromosome"/>
</dbReference>
<dbReference type="GO" id="GO:0022625">
    <property type="term" value="C:cytosolic large ribosomal subunit"/>
    <property type="evidence" value="ECO:0007669"/>
    <property type="project" value="TreeGrafter"/>
</dbReference>
<dbReference type="GO" id="GO:0019843">
    <property type="term" value="F:rRNA binding"/>
    <property type="evidence" value="ECO:0007669"/>
    <property type="project" value="UniProtKB-UniRule"/>
</dbReference>
<dbReference type="GO" id="GO:0003735">
    <property type="term" value="F:structural constituent of ribosome"/>
    <property type="evidence" value="ECO:0007669"/>
    <property type="project" value="InterPro"/>
</dbReference>
<dbReference type="GO" id="GO:0006412">
    <property type="term" value="P:translation"/>
    <property type="evidence" value="ECO:0007669"/>
    <property type="project" value="UniProtKB-UniRule"/>
</dbReference>
<dbReference type="FunFam" id="2.40.30.10:FF:000004">
    <property type="entry name" value="50S ribosomal protein L3"/>
    <property type="match status" value="1"/>
</dbReference>
<dbReference type="FunFam" id="3.30.160.810:FF:000001">
    <property type="entry name" value="50S ribosomal protein L3"/>
    <property type="match status" value="1"/>
</dbReference>
<dbReference type="Gene3D" id="3.30.160.810">
    <property type="match status" value="1"/>
</dbReference>
<dbReference type="Gene3D" id="2.40.30.10">
    <property type="entry name" value="Translation factors"/>
    <property type="match status" value="1"/>
</dbReference>
<dbReference type="HAMAP" id="MF_01325_B">
    <property type="entry name" value="Ribosomal_uL3_B"/>
    <property type="match status" value="1"/>
</dbReference>
<dbReference type="InterPro" id="IPR000597">
    <property type="entry name" value="Ribosomal_uL3"/>
</dbReference>
<dbReference type="InterPro" id="IPR019927">
    <property type="entry name" value="Ribosomal_uL3_bac/org-type"/>
</dbReference>
<dbReference type="InterPro" id="IPR019926">
    <property type="entry name" value="Ribosomal_uL3_CS"/>
</dbReference>
<dbReference type="InterPro" id="IPR009000">
    <property type="entry name" value="Transl_B-barrel_sf"/>
</dbReference>
<dbReference type="NCBIfam" id="TIGR03625">
    <property type="entry name" value="L3_bact"/>
    <property type="match status" value="1"/>
</dbReference>
<dbReference type="PANTHER" id="PTHR11229">
    <property type="entry name" value="50S RIBOSOMAL PROTEIN L3"/>
    <property type="match status" value="1"/>
</dbReference>
<dbReference type="PANTHER" id="PTHR11229:SF16">
    <property type="entry name" value="LARGE RIBOSOMAL SUBUNIT PROTEIN UL3C"/>
    <property type="match status" value="1"/>
</dbReference>
<dbReference type="Pfam" id="PF00297">
    <property type="entry name" value="Ribosomal_L3"/>
    <property type="match status" value="1"/>
</dbReference>
<dbReference type="SUPFAM" id="SSF50447">
    <property type="entry name" value="Translation proteins"/>
    <property type="match status" value="1"/>
</dbReference>
<dbReference type="PROSITE" id="PS00474">
    <property type="entry name" value="RIBOSOMAL_L3"/>
    <property type="match status" value="1"/>
</dbReference>
<sequence length="212" mass="22494">MAIGLIGRKVGMTRIFNEDGASVPVTVIEIAANRVTQVKTLDTDGYRALQVTTGTKKANRITKPEAGHFAKAGVEAGRGLWELRLADGDGEGIEVGAELNVDIFADIAKVDVTGQSKGKGFQGGIKRWNFHAQDMTHGNSLAHRSNGSIGQNQTPGRVFKGKKMSGHMGAERVTTQNLDIVRVDAERNLLLVKGAVPGATNGDLIIKPAVKA</sequence>
<reference key="1">
    <citation type="journal article" date="2008" name="PLoS ONE">
        <title>Environmental adaptation: genomic analysis of the piezotolerant and psychrotolerant deep-sea iron reducing bacterium Shewanella piezotolerans WP3.</title>
        <authorList>
            <person name="Wang F."/>
            <person name="Wang J."/>
            <person name="Jian H."/>
            <person name="Zhang B."/>
            <person name="Li S."/>
            <person name="Wang F."/>
            <person name="Zeng X."/>
            <person name="Gao L."/>
            <person name="Bartlett D.H."/>
            <person name="Yu J."/>
            <person name="Hu S."/>
            <person name="Xiao X."/>
        </authorList>
    </citation>
    <scope>NUCLEOTIDE SEQUENCE [LARGE SCALE GENOMIC DNA]</scope>
    <source>
        <strain>WP3 / JCM 13877</strain>
    </source>
</reference>
<accession>B8CND3</accession>
<keyword id="KW-0488">Methylation</keyword>
<keyword id="KW-0687">Ribonucleoprotein</keyword>
<keyword id="KW-0689">Ribosomal protein</keyword>
<keyword id="KW-0694">RNA-binding</keyword>
<keyword id="KW-0699">rRNA-binding</keyword>
<evidence type="ECO:0000255" key="1">
    <source>
        <dbReference type="HAMAP-Rule" id="MF_01325"/>
    </source>
</evidence>
<evidence type="ECO:0000305" key="2"/>
<comment type="function">
    <text evidence="1">One of the primary rRNA binding proteins, it binds directly near the 3'-end of the 23S rRNA, where it nucleates assembly of the 50S subunit.</text>
</comment>
<comment type="subunit">
    <text evidence="1">Part of the 50S ribosomal subunit. Forms a cluster with proteins L14 and L19.</text>
</comment>
<comment type="PTM">
    <text evidence="1">Methylated by PrmB.</text>
</comment>
<comment type="similarity">
    <text evidence="1">Belongs to the universal ribosomal protein uL3 family.</text>
</comment>
<organism>
    <name type="scientific">Shewanella piezotolerans (strain WP3 / JCM 13877)</name>
    <dbReference type="NCBI Taxonomy" id="225849"/>
    <lineage>
        <taxon>Bacteria</taxon>
        <taxon>Pseudomonadati</taxon>
        <taxon>Pseudomonadota</taxon>
        <taxon>Gammaproteobacteria</taxon>
        <taxon>Alteromonadales</taxon>
        <taxon>Shewanellaceae</taxon>
        <taxon>Shewanella</taxon>
    </lineage>
</organism>
<proteinExistence type="inferred from homology"/>
<protein>
    <recommendedName>
        <fullName evidence="1">Large ribosomal subunit protein uL3</fullName>
    </recommendedName>
    <alternativeName>
        <fullName evidence="2">50S ribosomal protein L3</fullName>
    </alternativeName>
</protein>
<feature type="chain" id="PRO_1000141920" description="Large ribosomal subunit protein uL3">
    <location>
        <begin position="1"/>
        <end position="212"/>
    </location>
</feature>
<feature type="modified residue" description="N5-methylglutamine" evidence="1">
    <location>
        <position position="153"/>
    </location>
</feature>
<name>RL3_SHEPW</name>